<comment type="function">
    <text evidence="1">Acts as a ribosome collision sensor. Detects stalled/collided disomes (pairs of ribosomes where the leading ribosome is stalled and a second ribosome has collided with it) and endonucleolytically cleaves mRNA at the 5' boundary of the stalled ribosome. Stalled/collided disomes form a new interface (primarily via the 30S subunits) that binds SmrB. Cleaved mRNA becomes available for tmRNA ligation, leading to ribosomal subunit dissociation and rescue of stalled ribosomes.</text>
</comment>
<comment type="subunit">
    <text evidence="1">Associates with collided ribosomes, but not with correctly translating polysomes.</text>
</comment>
<comment type="similarity">
    <text evidence="1">Belongs to the SmrB family.</text>
</comment>
<dbReference type="EC" id="3.1.-.-" evidence="1"/>
<dbReference type="EMBL" id="AE016826">
    <property type="protein sequence ID" value="AAO26827.1"/>
    <property type="molecule type" value="Genomic_DNA"/>
</dbReference>
<dbReference type="RefSeq" id="WP_011091228.1">
    <property type="nucleotide sequence ID" value="NC_004545.1"/>
</dbReference>
<dbReference type="SMR" id="Q89AX8"/>
<dbReference type="STRING" id="224915.bbp_092"/>
<dbReference type="KEGG" id="bab:bbp_092"/>
<dbReference type="eggNOG" id="COG2840">
    <property type="taxonomic scope" value="Bacteria"/>
</dbReference>
<dbReference type="HOGENOM" id="CLU_055978_4_0_6"/>
<dbReference type="OrthoDB" id="5795446at2"/>
<dbReference type="Proteomes" id="UP000000601">
    <property type="component" value="Chromosome"/>
</dbReference>
<dbReference type="GO" id="GO:0004521">
    <property type="term" value="F:RNA endonuclease activity"/>
    <property type="evidence" value="ECO:0007669"/>
    <property type="project" value="UniProtKB-UniRule"/>
</dbReference>
<dbReference type="GO" id="GO:0019843">
    <property type="term" value="F:rRNA binding"/>
    <property type="evidence" value="ECO:0007669"/>
    <property type="project" value="UniProtKB-UniRule"/>
</dbReference>
<dbReference type="GO" id="GO:0072344">
    <property type="term" value="P:rescue of stalled ribosome"/>
    <property type="evidence" value="ECO:0007669"/>
    <property type="project" value="UniProtKB-UniRule"/>
</dbReference>
<dbReference type="Gene3D" id="3.30.1370.110">
    <property type="match status" value="1"/>
</dbReference>
<dbReference type="HAMAP" id="MF_01042">
    <property type="entry name" value="SmrB"/>
    <property type="match status" value="1"/>
</dbReference>
<dbReference type="InterPro" id="IPR002625">
    <property type="entry name" value="Smr_dom"/>
</dbReference>
<dbReference type="InterPro" id="IPR036063">
    <property type="entry name" value="Smr_dom_sf"/>
</dbReference>
<dbReference type="InterPro" id="IPR022990">
    <property type="entry name" value="SmrB-like"/>
</dbReference>
<dbReference type="NCBIfam" id="NF003432">
    <property type="entry name" value="PRK04946.1"/>
    <property type="match status" value="1"/>
</dbReference>
<dbReference type="PANTHER" id="PTHR35562">
    <property type="entry name" value="DNA ENDONUCLEASE SMRA-RELATED"/>
    <property type="match status" value="1"/>
</dbReference>
<dbReference type="PANTHER" id="PTHR35562:SF1">
    <property type="entry name" value="UPF0115 PROTEIN YFCN"/>
    <property type="match status" value="1"/>
</dbReference>
<dbReference type="Pfam" id="PF01713">
    <property type="entry name" value="Smr"/>
    <property type="match status" value="1"/>
</dbReference>
<dbReference type="SMART" id="SM00463">
    <property type="entry name" value="SMR"/>
    <property type="match status" value="1"/>
</dbReference>
<dbReference type="SUPFAM" id="SSF160443">
    <property type="entry name" value="SMR domain-like"/>
    <property type="match status" value="1"/>
</dbReference>
<dbReference type="PROSITE" id="PS50828">
    <property type="entry name" value="SMR"/>
    <property type="match status" value="1"/>
</dbReference>
<feature type="chain" id="PRO_0000214550" description="Ribosome rescue factor SmrB">
    <location>
        <begin position="1"/>
        <end position="176"/>
    </location>
</feature>
<feature type="domain" description="Smr" evidence="1">
    <location>
        <begin position="98"/>
        <end position="173"/>
    </location>
</feature>
<protein>
    <recommendedName>
        <fullName evidence="1">Ribosome rescue factor SmrB</fullName>
        <ecNumber evidence="1">3.1.-.-</ecNumber>
    </recommendedName>
</protein>
<gene>
    <name evidence="1" type="primary">smrB</name>
    <name type="ordered locus">bbp_092</name>
</gene>
<sequence>MNKSDSLLSKDLFLLYQEFSEIRKIKQDTVFQSRRFKLVQDIKIKKNMYEQDIHYHYLSCQKFQISFNHDSIFYLRNKNYFDVLKKLKIGKYVPEIILDVHGLNQDQAKRKLGELLNICHKENLFCASVIHGHGRNILKNKIPIWLSRHPSVIAFYKIPKKFGRSTAILFLIHSSD</sequence>
<organism>
    <name type="scientific">Buchnera aphidicola subsp. Baizongia pistaciae (strain Bp)</name>
    <dbReference type="NCBI Taxonomy" id="224915"/>
    <lineage>
        <taxon>Bacteria</taxon>
        <taxon>Pseudomonadati</taxon>
        <taxon>Pseudomonadota</taxon>
        <taxon>Gammaproteobacteria</taxon>
        <taxon>Enterobacterales</taxon>
        <taxon>Erwiniaceae</taxon>
        <taxon>Buchnera</taxon>
    </lineage>
</organism>
<reference key="1">
    <citation type="journal article" date="2003" name="Proc. Natl. Acad. Sci. U.S.A.">
        <title>Reductive genome evolution in Buchnera aphidicola.</title>
        <authorList>
            <person name="van Ham R.C.H.J."/>
            <person name="Kamerbeek J."/>
            <person name="Palacios C."/>
            <person name="Rausell C."/>
            <person name="Abascal F."/>
            <person name="Bastolla U."/>
            <person name="Fernandez J.M."/>
            <person name="Jimenez L."/>
            <person name="Postigo M."/>
            <person name="Silva F.J."/>
            <person name="Tamames J."/>
            <person name="Viguera E."/>
            <person name="Latorre A."/>
            <person name="Valencia A."/>
            <person name="Moran F."/>
            <person name="Moya A."/>
        </authorList>
    </citation>
    <scope>NUCLEOTIDE SEQUENCE [LARGE SCALE GENOMIC DNA]</scope>
    <source>
        <strain>Bp</strain>
    </source>
</reference>
<accession>Q89AX8</accession>
<proteinExistence type="inferred from homology"/>
<evidence type="ECO:0000255" key="1">
    <source>
        <dbReference type="HAMAP-Rule" id="MF_01042"/>
    </source>
</evidence>
<name>SMRB_BUCBP</name>
<keyword id="KW-0255">Endonuclease</keyword>
<keyword id="KW-0378">Hydrolase</keyword>
<keyword id="KW-0540">Nuclease</keyword>
<keyword id="KW-1185">Reference proteome</keyword>
<keyword id="KW-0694">RNA-binding</keyword>
<keyword id="KW-0699">rRNA-binding</keyword>